<proteinExistence type="inferred from homology"/>
<dbReference type="EMBL" id="M10074">
    <property type="protein sequence ID" value="AAA32275.1"/>
    <property type="molecule type" value="Genomic_DNA"/>
</dbReference>
<dbReference type="EMBL" id="AF217253">
    <property type="protein sequence ID" value="AAF75028.1"/>
    <property type="molecule type" value="Genomic_DNA"/>
</dbReference>
<dbReference type="EMBL" id="BK000583">
    <property type="protein sequence ID" value="DAA01025.1"/>
    <property type="molecule type" value="Genomic_DNA"/>
</dbReference>
<dbReference type="PIR" id="A04293">
    <property type="entry name" value="Z8BPC2"/>
</dbReference>
<dbReference type="RefSeq" id="NP_059610.1">
    <property type="nucleotide sequence ID" value="NC_002371.2"/>
</dbReference>
<dbReference type="GeneID" id="1262824"/>
<dbReference type="KEGG" id="vg:1262824"/>
<dbReference type="OrthoDB" id="5436at10239"/>
<dbReference type="Proteomes" id="UP000001795">
    <property type="component" value="Segment"/>
</dbReference>
<dbReference type="Proteomes" id="UP000007960">
    <property type="component" value="Segment"/>
</dbReference>
<dbReference type="GO" id="GO:0006260">
    <property type="term" value="P:DNA replication"/>
    <property type="evidence" value="ECO:0007669"/>
    <property type="project" value="UniProtKB-KW"/>
</dbReference>
<dbReference type="Gene3D" id="1.10.10.10">
    <property type="entry name" value="Winged helix-like DNA-binding domain superfamily/Winged helix DNA-binding domain"/>
    <property type="match status" value="1"/>
</dbReference>
<dbReference type="InterPro" id="IPR006497">
    <property type="entry name" value="Phage_lambda_VrpO_N"/>
</dbReference>
<dbReference type="InterPro" id="IPR036388">
    <property type="entry name" value="WH-like_DNA-bd_sf"/>
</dbReference>
<dbReference type="NCBIfam" id="TIGR01610">
    <property type="entry name" value="phage_O_Nterm"/>
    <property type="match status" value="1"/>
</dbReference>
<dbReference type="Pfam" id="PF04492">
    <property type="entry name" value="Phage_rep_O"/>
    <property type="match status" value="1"/>
</dbReference>
<gene>
    <name type="primary">18</name>
</gene>
<organism>
    <name type="scientific">Salmonella phage P22</name>
    <name type="common">Bacteriophage P22</name>
    <dbReference type="NCBI Taxonomy" id="10754"/>
    <lineage>
        <taxon>Viruses</taxon>
        <taxon>Duplodnaviria</taxon>
        <taxon>Heunggongvirae</taxon>
        <taxon>Uroviricota</taxon>
        <taxon>Caudoviricetes</taxon>
        <taxon>Lederbergvirus</taxon>
    </lineage>
</organism>
<sequence>MSNLATVTPIKPHLEVVEHRVAELDDGYTRTANTLLEAVMLSGLTQHQLLIVMAVWRKTYGYNKKIDWIGNEQFAELTGMAPTKCSTAKNELIRMGVLTQVGRQVGMNKNISEWKTKVNGFGKTFTRSVKLTFTKSVKTNLPNQSNTKDNIQKTINTNTPLPPKGGCDEGSKPEKRKPTKINYSEYLAAYNEIVGDRLPHAVEVNSERQRKLKKLIDSLATKNIDGFRAYVKAFMAAARPFHFGDNDRDWVANFDYLLRPKVLIAIREGTL</sequence>
<feature type="chain" id="PRO_0000077701" description="DNA replication protein gp18">
    <location>
        <begin position="1"/>
        <end position="271"/>
    </location>
</feature>
<feature type="region of interest" description="Disordered" evidence="1">
    <location>
        <begin position="141"/>
        <end position="178"/>
    </location>
</feature>
<feature type="compositionally biased region" description="Polar residues" evidence="1">
    <location>
        <begin position="141"/>
        <end position="159"/>
    </location>
</feature>
<accession>P03687</accession>
<accession>Q7PCE8</accession>
<protein>
    <recommendedName>
        <fullName>DNA replication protein gp18</fullName>
    </recommendedName>
</protein>
<name>VG18_BPP22</name>
<comment type="similarity">
    <text evidence="2">Belongs to the phage O protein family.</text>
</comment>
<organismHost>
    <name type="scientific">Salmonella typhimurium</name>
    <dbReference type="NCBI Taxonomy" id="90371"/>
</organismHost>
<evidence type="ECO:0000256" key="1">
    <source>
        <dbReference type="SAM" id="MobiDB-lite"/>
    </source>
</evidence>
<evidence type="ECO:0000305" key="2"/>
<keyword id="KW-0235">DNA replication</keyword>
<keyword id="KW-0244">Early protein</keyword>
<keyword id="KW-1185">Reference proteome</keyword>
<reference key="1">
    <citation type="journal article" date="1984" name="Gene">
        <title>Sequence analysis of a region from the early right operon in phage P22 including the replication genes 18 and 12.</title>
        <authorList>
            <person name="Backhaus H."/>
            <person name="Petri J.B."/>
        </authorList>
    </citation>
    <scope>NUCLEOTIDE SEQUENCE [GENOMIC DNA]</scope>
</reference>
<reference key="2">
    <citation type="journal article" date="2000" name="J. Bacteriol.">
        <title>Sequence of the genome of Salmonella bacteriophage P22.</title>
        <authorList>
            <person name="Vander Byl C.S."/>
            <person name="Kropinski A.M.B."/>
        </authorList>
    </citation>
    <scope>NUCLEOTIDE SEQUENCE [LARGE SCALE GENOMIC DNA]</scope>
</reference>
<reference key="3">
    <citation type="journal article" date="2003" name="J. Bacteriol.">
        <title>Corrected sequence of the bacteriophage P22 genome.</title>
        <authorList>
            <person name="Pedulla M.L."/>
            <person name="Ford M.E."/>
            <person name="Karthikeyan T."/>
            <person name="Houtz J.M."/>
            <person name="Hendrix R.W."/>
            <person name="Hatfull G.F."/>
            <person name="Poteete A.R."/>
            <person name="Gilcrease E.B."/>
            <person name="Winn-Stapley D.A."/>
            <person name="Casjens S.R."/>
        </authorList>
    </citation>
    <scope>NUCLEOTIDE SEQUENCE [LARGE SCALE GENOMIC DNA]</scope>
</reference>